<protein>
    <recommendedName>
        <fullName>Weak toxin CM-13b</fullName>
    </recommendedName>
</protein>
<feature type="chain" id="PRO_0000093635" description="Weak toxin CM-13b" evidence="3">
    <location>
        <begin position="1"/>
        <end position="65"/>
    </location>
</feature>
<feature type="disulfide bond" evidence="2">
    <location>
        <begin position="3"/>
        <end position="24"/>
    </location>
</feature>
<feature type="disulfide bond" evidence="2">
    <location>
        <begin position="6"/>
        <end position="11"/>
    </location>
</feature>
<feature type="disulfide bond" evidence="2">
    <location>
        <begin position="17"/>
        <end position="42"/>
    </location>
</feature>
<feature type="disulfide bond" evidence="2">
    <location>
        <begin position="46"/>
        <end position="57"/>
    </location>
</feature>
<feature type="disulfide bond" evidence="2">
    <location>
        <begin position="58"/>
        <end position="63"/>
    </location>
</feature>
<sequence>LTCFNCPEVYCNRFHTCRNGEKICFKRFNERKLLGKRYTRGCAATCPVAKPREIVECCSTDRCNH</sequence>
<proteinExistence type="evidence at protein level"/>
<accession>P01399</accession>
<keyword id="KW-0903">Direct protein sequencing</keyword>
<keyword id="KW-1015">Disulfide bond</keyword>
<keyword id="KW-0964">Secreted</keyword>
<keyword id="KW-0800">Toxin</keyword>
<name>3NO2D_NAJHA</name>
<evidence type="ECO:0000250" key="1">
    <source>
        <dbReference type="UniProtKB" id="O42255"/>
    </source>
</evidence>
<evidence type="ECO:0000250" key="2">
    <source>
        <dbReference type="UniProtKB" id="Q8AY51"/>
    </source>
</evidence>
<evidence type="ECO:0000269" key="3">
    <source>
    </source>
</evidence>
<evidence type="ECO:0000305" key="4"/>
<dbReference type="PIR" id="A01670">
    <property type="entry name" value="V6NJ3E"/>
</dbReference>
<dbReference type="SMR" id="P01399"/>
<dbReference type="GO" id="GO:0005576">
    <property type="term" value="C:extracellular region"/>
    <property type="evidence" value="ECO:0007669"/>
    <property type="project" value="UniProtKB-SubCell"/>
</dbReference>
<dbReference type="GO" id="GO:0090729">
    <property type="term" value="F:toxin activity"/>
    <property type="evidence" value="ECO:0007669"/>
    <property type="project" value="UniProtKB-KW"/>
</dbReference>
<dbReference type="CDD" id="cd00206">
    <property type="entry name" value="TFP_snake_toxin"/>
    <property type="match status" value="1"/>
</dbReference>
<dbReference type="FunFam" id="2.10.60.10:FF:000024">
    <property type="entry name" value="Cytotoxin 1"/>
    <property type="match status" value="1"/>
</dbReference>
<dbReference type="Gene3D" id="2.10.60.10">
    <property type="entry name" value="CD59"/>
    <property type="match status" value="1"/>
</dbReference>
<dbReference type="InterPro" id="IPR003571">
    <property type="entry name" value="Snake_3FTx"/>
</dbReference>
<dbReference type="InterPro" id="IPR045860">
    <property type="entry name" value="Snake_toxin-like_sf"/>
</dbReference>
<dbReference type="InterPro" id="IPR018354">
    <property type="entry name" value="Snake_toxin_con_site"/>
</dbReference>
<dbReference type="InterPro" id="IPR054131">
    <property type="entry name" value="Toxin_cobra-type"/>
</dbReference>
<dbReference type="Pfam" id="PF21947">
    <property type="entry name" value="Toxin_cobra-type"/>
    <property type="match status" value="1"/>
</dbReference>
<dbReference type="SUPFAM" id="SSF57302">
    <property type="entry name" value="Snake toxin-like"/>
    <property type="match status" value="1"/>
</dbReference>
<dbReference type="PROSITE" id="PS00272">
    <property type="entry name" value="SNAKE_TOXIN"/>
    <property type="match status" value="1"/>
</dbReference>
<comment type="function">
    <text evidence="1">Binds with low affinity to muscular (alpha-1-beta-1-delta-epsilon/CHRNA1-CHRNB1-CHRND-CHRNE) and very low affinity to neuronal (alpha-7/CHRNA7) nicotinic acetylcholine receptor (nAChR).</text>
</comment>
<comment type="subcellular location">
    <subcellularLocation>
        <location evidence="3">Secreted</location>
    </subcellularLocation>
</comment>
<comment type="tissue specificity">
    <text evidence="4">Expressed by the venom gland.</text>
</comment>
<comment type="toxic dose">
    <text evidence="3">LD(50) is 4.82 mg/kg by intravenous injection.</text>
</comment>
<comment type="similarity">
    <text evidence="4">Belongs to the three-finger toxin family. Ancestral subfamily. Orphan group II sub-subfamily.</text>
</comment>
<reference key="1">
    <citation type="journal article" date="1975" name="Hoppe-Seyler's Z. Physiol. Chem.">
        <title>The purification and amino acid sequence of toxin CM-13b from Naja haje annulifera (Egyptian cobra) venom.</title>
        <authorList>
            <person name="Joubert F.J."/>
        </authorList>
    </citation>
    <scope>PROTEIN SEQUENCE</scope>
    <scope>TOXIC DOSE</scope>
    <scope>SUBCELLULAR LOCATION</scope>
    <source>
        <tissue>Venom</tissue>
    </source>
</reference>
<organism>
    <name type="scientific">Naja annulifera</name>
    <name type="common">Banded Egyptian cobra</name>
    <name type="synonym">Naja haje annulifera</name>
    <dbReference type="NCBI Taxonomy" id="96794"/>
    <lineage>
        <taxon>Eukaryota</taxon>
        <taxon>Metazoa</taxon>
        <taxon>Chordata</taxon>
        <taxon>Craniata</taxon>
        <taxon>Vertebrata</taxon>
        <taxon>Euteleostomi</taxon>
        <taxon>Lepidosauria</taxon>
        <taxon>Squamata</taxon>
        <taxon>Bifurcata</taxon>
        <taxon>Unidentata</taxon>
        <taxon>Episquamata</taxon>
        <taxon>Toxicofera</taxon>
        <taxon>Serpentes</taxon>
        <taxon>Colubroidea</taxon>
        <taxon>Elapidae</taxon>
        <taxon>Elapinae</taxon>
        <taxon>Naja</taxon>
    </lineage>
</organism>